<organism>
    <name type="scientific">Escherichia coli O157:H7</name>
    <dbReference type="NCBI Taxonomy" id="83334"/>
    <lineage>
        <taxon>Bacteria</taxon>
        <taxon>Pseudomonadati</taxon>
        <taxon>Pseudomonadota</taxon>
        <taxon>Gammaproteobacteria</taxon>
        <taxon>Enterobacterales</taxon>
        <taxon>Enterobacteriaceae</taxon>
        <taxon>Escherichia</taxon>
    </lineage>
</organism>
<gene>
    <name type="primary">ypjD</name>
    <name type="ordered locus">Z3905</name>
    <name type="ordered locus">ECs3474</name>
</gene>
<evidence type="ECO:0000250" key="1"/>
<evidence type="ECO:0000255" key="2"/>
<evidence type="ECO:0000305" key="3"/>
<keyword id="KW-0997">Cell inner membrane</keyword>
<keyword id="KW-1003">Cell membrane</keyword>
<keyword id="KW-0472">Membrane</keyword>
<keyword id="KW-1185">Reference proteome</keyword>
<keyword id="KW-0812">Transmembrane</keyword>
<keyword id="KW-1133">Transmembrane helix</keyword>
<name>YPJD_ECO57</name>
<comment type="subcellular location">
    <subcellularLocation>
        <location evidence="1">Cell inner membrane</location>
        <topology evidence="1">Multi-pass membrane protein</topology>
    </subcellularLocation>
</comment>
<comment type="sequence caution" evidence="3">
    <conflict type="erroneous initiation">
        <sequence resource="EMBL-CDS" id="AAG57722"/>
    </conflict>
</comment>
<comment type="sequence caution" evidence="3">
    <conflict type="erroneous initiation">
        <sequence resource="EMBL-CDS" id="BAB36897"/>
    </conflict>
</comment>
<protein>
    <recommendedName>
        <fullName>Inner membrane protein YpjD</fullName>
    </recommendedName>
</protein>
<proteinExistence type="inferred from homology"/>
<reference key="1">
    <citation type="journal article" date="2001" name="Nature">
        <title>Genome sequence of enterohaemorrhagic Escherichia coli O157:H7.</title>
        <authorList>
            <person name="Perna N.T."/>
            <person name="Plunkett G. III"/>
            <person name="Burland V."/>
            <person name="Mau B."/>
            <person name="Glasner J.D."/>
            <person name="Rose D.J."/>
            <person name="Mayhew G.F."/>
            <person name="Evans P.S."/>
            <person name="Gregor J."/>
            <person name="Kirkpatrick H.A."/>
            <person name="Posfai G."/>
            <person name="Hackett J."/>
            <person name="Klink S."/>
            <person name="Boutin A."/>
            <person name="Shao Y."/>
            <person name="Miller L."/>
            <person name="Grotbeck E.J."/>
            <person name="Davis N.W."/>
            <person name="Lim A."/>
            <person name="Dimalanta E.T."/>
            <person name="Potamousis K."/>
            <person name="Apodaca J."/>
            <person name="Anantharaman T.S."/>
            <person name="Lin J."/>
            <person name="Yen G."/>
            <person name="Schwartz D.C."/>
            <person name="Welch R.A."/>
            <person name="Blattner F.R."/>
        </authorList>
    </citation>
    <scope>NUCLEOTIDE SEQUENCE [LARGE SCALE GENOMIC DNA]</scope>
    <source>
        <strain>O157:H7 / EDL933 / ATCC 700927 / EHEC</strain>
    </source>
</reference>
<reference key="2">
    <citation type="journal article" date="2001" name="DNA Res.">
        <title>Complete genome sequence of enterohemorrhagic Escherichia coli O157:H7 and genomic comparison with a laboratory strain K-12.</title>
        <authorList>
            <person name="Hayashi T."/>
            <person name="Makino K."/>
            <person name="Ohnishi M."/>
            <person name="Kurokawa K."/>
            <person name="Ishii K."/>
            <person name="Yokoyama K."/>
            <person name="Han C.-G."/>
            <person name="Ohtsubo E."/>
            <person name="Nakayama K."/>
            <person name="Murata T."/>
            <person name="Tanaka M."/>
            <person name="Tobe T."/>
            <person name="Iida T."/>
            <person name="Takami H."/>
            <person name="Honda T."/>
            <person name="Sasakawa C."/>
            <person name="Ogasawara N."/>
            <person name="Yasunaga T."/>
            <person name="Kuhara S."/>
            <person name="Shiba T."/>
            <person name="Hattori M."/>
            <person name="Shinagawa H."/>
        </authorList>
    </citation>
    <scope>NUCLEOTIDE SEQUENCE [LARGE SCALE GENOMIC DNA]</scope>
    <source>
        <strain>O157:H7 / Sakai / RIMD 0509952 / EHEC</strain>
    </source>
</reference>
<dbReference type="EMBL" id="AE005174">
    <property type="protein sequence ID" value="AAG57722.1"/>
    <property type="status" value="ALT_INIT"/>
    <property type="molecule type" value="Genomic_DNA"/>
</dbReference>
<dbReference type="EMBL" id="BA000007">
    <property type="protein sequence ID" value="BAB36897.1"/>
    <property type="status" value="ALT_INIT"/>
    <property type="molecule type" value="Genomic_DNA"/>
</dbReference>
<dbReference type="RefSeq" id="NP_311501.2">
    <property type="nucleotide sequence ID" value="NC_002695.1"/>
</dbReference>
<dbReference type="RefSeq" id="WP_001338897.1">
    <property type="nucleotide sequence ID" value="NZ_VOAI01000040.1"/>
</dbReference>
<dbReference type="SMR" id="P64434"/>
<dbReference type="STRING" id="155864.Z3905"/>
<dbReference type="GeneID" id="914814"/>
<dbReference type="KEGG" id="ece:Z3905"/>
<dbReference type="KEGG" id="ecs:ECs_3474"/>
<dbReference type="PATRIC" id="fig|386585.9.peg.3628"/>
<dbReference type="eggNOG" id="COG4137">
    <property type="taxonomic scope" value="Bacteria"/>
</dbReference>
<dbReference type="HOGENOM" id="CLU_049710_1_2_6"/>
<dbReference type="Proteomes" id="UP000000558">
    <property type="component" value="Chromosome"/>
</dbReference>
<dbReference type="Proteomes" id="UP000002519">
    <property type="component" value="Chromosome"/>
</dbReference>
<dbReference type="GO" id="GO:0005886">
    <property type="term" value="C:plasma membrane"/>
    <property type="evidence" value="ECO:0007669"/>
    <property type="project" value="UniProtKB-SubCell"/>
</dbReference>
<dbReference type="GO" id="GO:0020037">
    <property type="term" value="F:heme binding"/>
    <property type="evidence" value="ECO:0007669"/>
    <property type="project" value="InterPro"/>
</dbReference>
<dbReference type="GO" id="GO:0017004">
    <property type="term" value="P:cytochrome complex assembly"/>
    <property type="evidence" value="ECO:0007669"/>
    <property type="project" value="InterPro"/>
</dbReference>
<dbReference type="InterPro" id="IPR002541">
    <property type="entry name" value="Cyt_c_assembly"/>
</dbReference>
<dbReference type="InterPro" id="IPR052372">
    <property type="entry name" value="YpjD/HemX"/>
</dbReference>
<dbReference type="PANTHER" id="PTHR38034">
    <property type="entry name" value="INNER MEMBRANE PROTEIN YPJD"/>
    <property type="match status" value="1"/>
</dbReference>
<dbReference type="PANTHER" id="PTHR38034:SF1">
    <property type="entry name" value="INNER MEMBRANE PROTEIN YPJD"/>
    <property type="match status" value="1"/>
</dbReference>
<dbReference type="Pfam" id="PF01578">
    <property type="entry name" value="Cytochrom_C_asm"/>
    <property type="match status" value="1"/>
</dbReference>
<feature type="chain" id="PRO_0000201345" description="Inner membrane protein YpjD">
    <location>
        <begin position="1"/>
        <end position="263"/>
    </location>
</feature>
<feature type="topological domain" description="Periplasmic" evidence="2">
    <location>
        <begin position="1"/>
        <end position="3"/>
    </location>
</feature>
<feature type="transmembrane region" description="Helical" evidence="2">
    <location>
        <begin position="4"/>
        <end position="23"/>
    </location>
</feature>
<feature type="topological domain" description="Cytoplasmic" evidence="2">
    <location>
        <begin position="24"/>
        <end position="34"/>
    </location>
</feature>
<feature type="transmembrane region" description="Helical" evidence="2">
    <location>
        <begin position="35"/>
        <end position="54"/>
    </location>
</feature>
<feature type="topological domain" description="Periplasmic" evidence="2">
    <location>
        <begin position="55"/>
        <end position="63"/>
    </location>
</feature>
<feature type="transmembrane region" description="Helical" evidence="2">
    <location>
        <begin position="64"/>
        <end position="83"/>
    </location>
</feature>
<feature type="topological domain" description="Cytoplasmic" evidence="2">
    <location>
        <begin position="84"/>
        <end position="89"/>
    </location>
</feature>
<feature type="transmembrane region" description="Helical" evidence="2">
    <location>
        <begin position="90"/>
        <end position="109"/>
    </location>
</feature>
<feature type="topological domain" description="Periplasmic" evidence="2">
    <location>
        <begin position="110"/>
        <end position="123"/>
    </location>
</feature>
<feature type="transmembrane region" description="Helical" evidence="2">
    <location>
        <begin position="124"/>
        <end position="146"/>
    </location>
</feature>
<feature type="topological domain" description="Cytoplasmic" evidence="2">
    <location>
        <begin position="147"/>
        <end position="181"/>
    </location>
</feature>
<feature type="transmembrane region" description="Helical" evidence="2">
    <location>
        <begin position="182"/>
        <end position="201"/>
    </location>
</feature>
<feature type="topological domain" description="Periplasmic" evidence="2">
    <location>
        <begin position="202"/>
        <end position="210"/>
    </location>
</feature>
<feature type="transmembrane region" description="Helical" evidence="2">
    <location>
        <begin position="211"/>
        <end position="228"/>
    </location>
</feature>
<feature type="topological domain" description="Cytoplasmic" evidence="2">
    <location>
        <begin position="229"/>
        <end position="236"/>
    </location>
</feature>
<feature type="transmembrane region" description="Helical" evidence="2">
    <location>
        <begin position="237"/>
        <end position="259"/>
    </location>
</feature>
<feature type="topological domain" description="Periplasmic" evidence="2">
    <location>
        <begin position="260"/>
        <end position="263"/>
    </location>
</feature>
<accession>P64434</accession>
<accession>P76599</accession>
<sequence>MPVFALLALVAYSVSLALIVPGLLQKNGGWRRMAIISAVIALVCHAIALEARILPDGDSGQNLSLLNVGSLVSLMICTVMTIVASRNRGWLLLPIVYAFALINLALATFMPNEYITHLEATPGMLVHIGLSLFSYATLIIAALYALQLAWIDYQLKNKKLAFNQEMPPLMSIERKMFHITQIGVVLLTLTLCTGLFYMHNLFSMENIDKAVLSIVAWFVYIVLLWGHYHEGWRGRRVVWFNVAGAVILTLAYFGSRIVQQLIS</sequence>